<reference key="1">
    <citation type="journal article" date="2006" name="J. Bacteriol.">
        <title>Complete genome sequence of the dehalorespiring bacterium Desulfitobacterium hafniense Y51 and comparison with Dehalococcoides ethenogenes 195.</title>
        <authorList>
            <person name="Nonaka H."/>
            <person name="Keresztes G."/>
            <person name="Shinoda Y."/>
            <person name="Ikenaga Y."/>
            <person name="Abe M."/>
            <person name="Naito K."/>
            <person name="Inatomi K."/>
            <person name="Furukawa K."/>
            <person name="Inui M."/>
            <person name="Yukawa H."/>
        </authorList>
    </citation>
    <scope>NUCLEOTIDE SEQUENCE [LARGE SCALE GENOMIC DNA]</scope>
    <source>
        <strain>Y51</strain>
    </source>
</reference>
<dbReference type="EC" id="2.4.2.9" evidence="1"/>
<dbReference type="EMBL" id="AP008230">
    <property type="protein sequence ID" value="BAE86715.1"/>
    <property type="molecule type" value="Genomic_DNA"/>
</dbReference>
<dbReference type="RefSeq" id="WP_005815407.1">
    <property type="nucleotide sequence ID" value="NC_007907.1"/>
</dbReference>
<dbReference type="SMR" id="Q24MM7"/>
<dbReference type="STRING" id="138119.DSY4926"/>
<dbReference type="KEGG" id="dsy:DSY4926"/>
<dbReference type="eggNOG" id="COG0035">
    <property type="taxonomic scope" value="Bacteria"/>
</dbReference>
<dbReference type="HOGENOM" id="CLU_067096_2_2_9"/>
<dbReference type="UniPathway" id="UPA00574">
    <property type="reaction ID" value="UER00636"/>
</dbReference>
<dbReference type="Proteomes" id="UP000001946">
    <property type="component" value="Chromosome"/>
</dbReference>
<dbReference type="GO" id="GO:0005525">
    <property type="term" value="F:GTP binding"/>
    <property type="evidence" value="ECO:0007669"/>
    <property type="project" value="UniProtKB-KW"/>
</dbReference>
<dbReference type="GO" id="GO:0000287">
    <property type="term" value="F:magnesium ion binding"/>
    <property type="evidence" value="ECO:0007669"/>
    <property type="project" value="UniProtKB-UniRule"/>
</dbReference>
<dbReference type="GO" id="GO:0004845">
    <property type="term" value="F:uracil phosphoribosyltransferase activity"/>
    <property type="evidence" value="ECO:0007669"/>
    <property type="project" value="UniProtKB-UniRule"/>
</dbReference>
<dbReference type="GO" id="GO:0044206">
    <property type="term" value="P:UMP salvage"/>
    <property type="evidence" value="ECO:0007669"/>
    <property type="project" value="UniProtKB-UniRule"/>
</dbReference>
<dbReference type="GO" id="GO:0006223">
    <property type="term" value="P:uracil salvage"/>
    <property type="evidence" value="ECO:0007669"/>
    <property type="project" value="InterPro"/>
</dbReference>
<dbReference type="CDD" id="cd06223">
    <property type="entry name" value="PRTases_typeI"/>
    <property type="match status" value="1"/>
</dbReference>
<dbReference type="FunFam" id="3.40.50.2020:FF:000003">
    <property type="entry name" value="Uracil phosphoribosyltransferase"/>
    <property type="match status" value="1"/>
</dbReference>
<dbReference type="Gene3D" id="3.40.50.2020">
    <property type="match status" value="1"/>
</dbReference>
<dbReference type="HAMAP" id="MF_01218_B">
    <property type="entry name" value="Upp_B"/>
    <property type="match status" value="1"/>
</dbReference>
<dbReference type="InterPro" id="IPR000836">
    <property type="entry name" value="PRibTrfase_dom"/>
</dbReference>
<dbReference type="InterPro" id="IPR029057">
    <property type="entry name" value="PRTase-like"/>
</dbReference>
<dbReference type="InterPro" id="IPR034332">
    <property type="entry name" value="Upp_B"/>
</dbReference>
<dbReference type="InterPro" id="IPR050054">
    <property type="entry name" value="UPRTase/APRTase"/>
</dbReference>
<dbReference type="InterPro" id="IPR005765">
    <property type="entry name" value="Ura_phspho_trans"/>
</dbReference>
<dbReference type="NCBIfam" id="NF001097">
    <property type="entry name" value="PRK00129.1"/>
    <property type="match status" value="1"/>
</dbReference>
<dbReference type="NCBIfam" id="TIGR01091">
    <property type="entry name" value="upp"/>
    <property type="match status" value="1"/>
</dbReference>
<dbReference type="PANTHER" id="PTHR32315">
    <property type="entry name" value="ADENINE PHOSPHORIBOSYLTRANSFERASE"/>
    <property type="match status" value="1"/>
</dbReference>
<dbReference type="PANTHER" id="PTHR32315:SF4">
    <property type="entry name" value="URACIL PHOSPHORIBOSYLTRANSFERASE, CHLOROPLASTIC"/>
    <property type="match status" value="1"/>
</dbReference>
<dbReference type="Pfam" id="PF14681">
    <property type="entry name" value="UPRTase"/>
    <property type="match status" value="1"/>
</dbReference>
<dbReference type="SUPFAM" id="SSF53271">
    <property type="entry name" value="PRTase-like"/>
    <property type="match status" value="1"/>
</dbReference>
<comment type="function">
    <text evidence="1">Catalyzes the conversion of uracil and 5-phospho-alpha-D-ribose 1-diphosphate (PRPP) to UMP and diphosphate.</text>
</comment>
<comment type="catalytic activity">
    <reaction evidence="1">
        <text>UMP + diphosphate = 5-phospho-alpha-D-ribose 1-diphosphate + uracil</text>
        <dbReference type="Rhea" id="RHEA:13017"/>
        <dbReference type="ChEBI" id="CHEBI:17568"/>
        <dbReference type="ChEBI" id="CHEBI:33019"/>
        <dbReference type="ChEBI" id="CHEBI:57865"/>
        <dbReference type="ChEBI" id="CHEBI:58017"/>
        <dbReference type="EC" id="2.4.2.9"/>
    </reaction>
</comment>
<comment type="cofactor">
    <cofactor evidence="1">
        <name>Mg(2+)</name>
        <dbReference type="ChEBI" id="CHEBI:18420"/>
    </cofactor>
    <text evidence="1">Binds 1 Mg(2+) ion per subunit. The magnesium is bound as Mg-PRPP.</text>
</comment>
<comment type="activity regulation">
    <text evidence="1">Allosterically activated by GTP.</text>
</comment>
<comment type="pathway">
    <text evidence="1">Pyrimidine metabolism; UMP biosynthesis via salvage pathway; UMP from uracil: step 1/1.</text>
</comment>
<comment type="similarity">
    <text evidence="1">Belongs to the UPRTase family.</text>
</comment>
<organism>
    <name type="scientific">Desulfitobacterium hafniense (strain Y51)</name>
    <dbReference type="NCBI Taxonomy" id="138119"/>
    <lineage>
        <taxon>Bacteria</taxon>
        <taxon>Bacillati</taxon>
        <taxon>Bacillota</taxon>
        <taxon>Clostridia</taxon>
        <taxon>Eubacteriales</taxon>
        <taxon>Desulfitobacteriaceae</taxon>
        <taxon>Desulfitobacterium</taxon>
    </lineage>
</organism>
<feature type="chain" id="PRO_1000053714" description="Uracil phosphoribosyltransferase">
    <location>
        <begin position="1"/>
        <end position="209"/>
    </location>
</feature>
<feature type="binding site" evidence="1">
    <location>
        <position position="79"/>
    </location>
    <ligand>
        <name>5-phospho-alpha-D-ribose 1-diphosphate</name>
        <dbReference type="ChEBI" id="CHEBI:58017"/>
    </ligand>
</feature>
<feature type="binding site" evidence="1">
    <location>
        <position position="104"/>
    </location>
    <ligand>
        <name>5-phospho-alpha-D-ribose 1-diphosphate</name>
        <dbReference type="ChEBI" id="CHEBI:58017"/>
    </ligand>
</feature>
<feature type="binding site" evidence="1">
    <location>
        <begin position="131"/>
        <end position="139"/>
    </location>
    <ligand>
        <name>5-phospho-alpha-D-ribose 1-diphosphate</name>
        <dbReference type="ChEBI" id="CHEBI:58017"/>
    </ligand>
</feature>
<feature type="binding site" evidence="1">
    <location>
        <position position="194"/>
    </location>
    <ligand>
        <name>uracil</name>
        <dbReference type="ChEBI" id="CHEBI:17568"/>
    </ligand>
</feature>
<feature type="binding site" evidence="1">
    <location>
        <begin position="199"/>
        <end position="201"/>
    </location>
    <ligand>
        <name>uracil</name>
        <dbReference type="ChEBI" id="CHEBI:17568"/>
    </ligand>
</feature>
<feature type="binding site" evidence="1">
    <location>
        <position position="200"/>
    </location>
    <ligand>
        <name>5-phospho-alpha-D-ribose 1-diphosphate</name>
        <dbReference type="ChEBI" id="CHEBI:58017"/>
    </ligand>
</feature>
<evidence type="ECO:0000255" key="1">
    <source>
        <dbReference type="HAMAP-Rule" id="MF_01218"/>
    </source>
</evidence>
<gene>
    <name evidence="1" type="primary">upp</name>
    <name type="ordered locus">DSY4926</name>
</gene>
<proteinExistence type="inferred from homology"/>
<accession>Q24MM7</accession>
<keyword id="KW-0021">Allosteric enzyme</keyword>
<keyword id="KW-0328">Glycosyltransferase</keyword>
<keyword id="KW-0342">GTP-binding</keyword>
<keyword id="KW-0460">Magnesium</keyword>
<keyword id="KW-0547">Nucleotide-binding</keyword>
<keyword id="KW-1185">Reference proteome</keyword>
<keyword id="KW-0808">Transferase</keyword>
<name>UPP_DESHY</name>
<sequence length="209" mass="22958">MAKVHILDHPLIQHKLSLIRDENTGSKDFRELVEEVSMLMAYEVTRDFPLQDVEVKTPVATMTAKAIAGRKVGLIPILRAGLGMVDGMLRLIPTAKVGHVGLYRDPETLKPVEYYCKLPTDVEERDLIVIDPMLATGGSATAAITFLKDRGAKSIKLMCLIAAPEGIKEVQNYHDDVDIFVAAVDDYLNDHGYIIPGLGDAGDRLFGTK</sequence>
<protein>
    <recommendedName>
        <fullName evidence="1">Uracil phosphoribosyltransferase</fullName>
        <ecNumber evidence="1">2.4.2.9</ecNumber>
    </recommendedName>
    <alternativeName>
        <fullName evidence="1">UMP pyrophosphorylase</fullName>
    </alternativeName>
    <alternativeName>
        <fullName evidence="1">UPRTase</fullName>
    </alternativeName>
</protein>